<feature type="signal peptide" evidence="2">
    <location>
        <begin position="1"/>
        <end position="26"/>
    </location>
</feature>
<feature type="chain" id="PRO_0000436749" description="Probable aspartyl protease At4g16563">
    <location>
        <begin position="27"/>
        <end position="499"/>
    </location>
</feature>
<feature type="domain" description="Peptidase A1" evidence="4">
    <location>
        <begin position="83"/>
        <end position="487"/>
    </location>
</feature>
<feature type="active site" evidence="4">
    <location>
        <position position="101"/>
    </location>
</feature>
<feature type="active site" evidence="4">
    <location>
        <position position="353"/>
    </location>
</feature>
<feature type="glycosylation site" description="N-linked (GlcNAc...) asparagine" evidence="3">
    <location>
        <position position="175"/>
    </location>
</feature>
<feature type="glycosylation site" description="N-linked (GlcNAc...) asparagine" evidence="3">
    <location>
        <position position="211"/>
    </location>
</feature>
<feature type="glycosylation site" description="N-linked (GlcNAc...) asparagine" evidence="3">
    <location>
        <position position="400"/>
    </location>
</feature>
<feature type="glycosylation site" description="N-linked (GlcNAc...) asparagine" evidence="3">
    <location>
        <position position="415"/>
    </location>
</feature>
<feature type="disulfide bond" evidence="1">
    <location>
        <begin position="111"/>
        <end position="119"/>
    </location>
</feature>
<feature type="disulfide bond" evidence="4">
    <location>
        <begin position="396"/>
        <end position="445"/>
    </location>
</feature>
<evidence type="ECO:0000250" key="1">
    <source>
        <dbReference type="UniProtKB" id="P42210"/>
    </source>
</evidence>
<evidence type="ECO:0000255" key="2"/>
<evidence type="ECO:0000255" key="3">
    <source>
        <dbReference type="PROSITE-ProRule" id="PRU00498"/>
    </source>
</evidence>
<evidence type="ECO:0000255" key="4">
    <source>
        <dbReference type="PROSITE-ProRule" id="PRU01103"/>
    </source>
</evidence>
<evidence type="ECO:0000305" key="5"/>
<evidence type="ECO:0000312" key="6">
    <source>
        <dbReference type="Araport" id="AT4G16563"/>
    </source>
</evidence>
<evidence type="ECO:0000312" key="7">
    <source>
        <dbReference type="EMBL" id="CAB10432.1"/>
    </source>
</evidence>
<gene>
    <name evidence="6" type="ordered locus">At4g16563</name>
    <name evidence="7" type="ORF">dl4305c</name>
</gene>
<comment type="similarity">
    <text evidence="5">Belongs to the peptidase A1 family.</text>
</comment>
<comment type="sequence caution" evidence="5">
    <conflict type="erroneous gene model prediction">
        <sequence resource="EMBL-CDS" id="CAB10432"/>
    </conflict>
    <text>The predicted gene has been split into 3 genes: At4g16560, At4g16563 and At4g16566.</text>
</comment>
<comment type="sequence caution" evidence="5">
    <conflict type="erroneous gene model prediction">
        <sequence resource="EMBL-CDS" id="CAB78698"/>
    </conflict>
    <text>The predicted gene has been split into 3 genes: At4g16560, At4g16563 and At4g16566.</text>
</comment>
<protein>
    <recommendedName>
        <fullName evidence="5">Probable aspartyl protease At4g16563</fullName>
        <ecNumber evidence="5">3.4.23.-</ecNumber>
    </recommendedName>
</protein>
<accession>Q940R4</accession>
<keyword id="KW-0064">Aspartyl protease</keyword>
<keyword id="KW-1015">Disulfide bond</keyword>
<keyword id="KW-0325">Glycoprotein</keyword>
<keyword id="KW-0378">Hydrolase</keyword>
<keyword id="KW-0645">Protease</keyword>
<keyword id="KW-1185">Reference proteome</keyword>
<keyword id="KW-0732">Signal</keyword>
<name>ASP63_ARATH</name>
<proteinExistence type="evidence at transcript level"/>
<sequence>MKTCLIFFLYTTILQYYFHFSVSSLSTPLLLHLSHSLSTSKHSSSPLHLLKSSSSRSSARFRRHHHKQQQQQLSLPISSGSDYLISLSVGSSSSAVSLYLDTGSDLVWFPCRPFTCILCESKPLPPSPPSSLSSSATTVSCSSPSCSAAHSSLPSSDLCAISNCPLDFIETGDCNTSSYPCPPFYYAYGDGSLVAKLYSDSLSLPSVSVSNFTFGCAHTTLAEPIGVAGFGRGRLSLPAQLAVHSPHLGNSFSYCLVSHSFDSDRVRRPSPLILGRFVDKKEKRVGTTDDHDDGDDEKKKKNEFVFTEMLENPKHPYFYSVSLQGISIGKRNIPAPAMLRRIDKNGGGGVVVDSGTTFTMLPAKFYNSVVEEFDSRVGRVHERADRVEPSSGMSPCYYLNQTVKVPALVLHFAGNRSSVTLPRRNYFYEFMDGGDGKEEKRKIGCLMLMNGGDESELRGGTGAILGNYQQQGFEVVYDLLNRRVGFAKRKCASLWDSLK</sequence>
<reference key="1">
    <citation type="journal article" date="1998" name="Nature">
        <title>Analysis of 1.9 Mb of contiguous sequence from chromosome 4 of Arabidopsis thaliana.</title>
        <authorList>
            <person name="Bevan M."/>
            <person name="Bancroft I."/>
            <person name="Bent E."/>
            <person name="Love K."/>
            <person name="Goodman H.M."/>
            <person name="Dean C."/>
            <person name="Bergkamp R."/>
            <person name="Dirkse W."/>
            <person name="van Staveren M."/>
            <person name="Stiekema W."/>
            <person name="Drost L."/>
            <person name="Ridley P."/>
            <person name="Hudson S.-A."/>
            <person name="Patel K."/>
            <person name="Murphy G."/>
            <person name="Piffanelli P."/>
            <person name="Wedler H."/>
            <person name="Wedler E."/>
            <person name="Wambutt R."/>
            <person name="Weitzenegger T."/>
            <person name="Pohl T."/>
            <person name="Terryn N."/>
            <person name="Gielen J."/>
            <person name="Villarroel R."/>
            <person name="De Clercq R."/>
            <person name="van Montagu M."/>
            <person name="Lecharny A."/>
            <person name="Aubourg S."/>
            <person name="Gy I."/>
            <person name="Kreis M."/>
            <person name="Lao N."/>
            <person name="Kavanagh T."/>
            <person name="Hempel S."/>
            <person name="Kotter P."/>
            <person name="Entian K.-D."/>
            <person name="Rieger M."/>
            <person name="Schaefer M."/>
            <person name="Funk B."/>
            <person name="Mueller-Auer S."/>
            <person name="Silvey M."/>
            <person name="James R."/>
            <person name="Monfort A."/>
            <person name="Pons A."/>
            <person name="Puigdomenech P."/>
            <person name="Douka A."/>
            <person name="Voukelatou E."/>
            <person name="Milioni D."/>
            <person name="Hatzopoulos P."/>
            <person name="Piravandi E."/>
            <person name="Obermaier B."/>
            <person name="Hilbert H."/>
            <person name="Duesterhoeft A."/>
            <person name="Moores T."/>
            <person name="Jones J.D.G."/>
            <person name="Eneva T."/>
            <person name="Palme K."/>
            <person name="Benes V."/>
            <person name="Rechmann S."/>
            <person name="Ansorge W."/>
            <person name="Cooke R."/>
            <person name="Berger C."/>
            <person name="Delseny M."/>
            <person name="Voet M."/>
            <person name="Volckaert G."/>
            <person name="Mewes H.-W."/>
            <person name="Klosterman S."/>
            <person name="Schueller C."/>
            <person name="Chalwatzis N."/>
        </authorList>
    </citation>
    <scope>NUCLEOTIDE SEQUENCE [LARGE SCALE GENOMIC DNA]</scope>
    <source>
        <strain>cv. Columbia</strain>
    </source>
</reference>
<reference key="2">
    <citation type="journal article" date="1999" name="Nature">
        <title>Sequence and analysis of chromosome 4 of the plant Arabidopsis thaliana.</title>
        <authorList>
            <person name="Mayer K.F.X."/>
            <person name="Schueller C."/>
            <person name="Wambutt R."/>
            <person name="Murphy G."/>
            <person name="Volckaert G."/>
            <person name="Pohl T."/>
            <person name="Duesterhoeft A."/>
            <person name="Stiekema W."/>
            <person name="Entian K.-D."/>
            <person name="Terryn N."/>
            <person name="Harris B."/>
            <person name="Ansorge W."/>
            <person name="Brandt P."/>
            <person name="Grivell L.A."/>
            <person name="Rieger M."/>
            <person name="Weichselgartner M."/>
            <person name="de Simone V."/>
            <person name="Obermaier B."/>
            <person name="Mache R."/>
            <person name="Mueller M."/>
            <person name="Kreis M."/>
            <person name="Delseny M."/>
            <person name="Puigdomenech P."/>
            <person name="Watson M."/>
            <person name="Schmidtheini T."/>
            <person name="Reichert B."/>
            <person name="Portetelle D."/>
            <person name="Perez-Alonso M."/>
            <person name="Boutry M."/>
            <person name="Bancroft I."/>
            <person name="Vos P."/>
            <person name="Hoheisel J."/>
            <person name="Zimmermann W."/>
            <person name="Wedler H."/>
            <person name="Ridley P."/>
            <person name="Langham S.-A."/>
            <person name="McCullagh B."/>
            <person name="Bilham L."/>
            <person name="Robben J."/>
            <person name="van der Schueren J."/>
            <person name="Grymonprez B."/>
            <person name="Chuang Y.-J."/>
            <person name="Vandenbussche F."/>
            <person name="Braeken M."/>
            <person name="Weltjens I."/>
            <person name="Voet M."/>
            <person name="Bastiaens I."/>
            <person name="Aert R."/>
            <person name="Defoor E."/>
            <person name="Weitzenegger T."/>
            <person name="Bothe G."/>
            <person name="Ramsperger U."/>
            <person name="Hilbert H."/>
            <person name="Braun M."/>
            <person name="Holzer E."/>
            <person name="Brandt A."/>
            <person name="Peters S."/>
            <person name="van Staveren M."/>
            <person name="Dirkse W."/>
            <person name="Mooijman P."/>
            <person name="Klein Lankhorst R."/>
            <person name="Rose M."/>
            <person name="Hauf J."/>
            <person name="Koetter P."/>
            <person name="Berneiser S."/>
            <person name="Hempel S."/>
            <person name="Feldpausch M."/>
            <person name="Lamberth S."/>
            <person name="Van den Daele H."/>
            <person name="De Keyser A."/>
            <person name="Buysshaert C."/>
            <person name="Gielen J."/>
            <person name="Villarroel R."/>
            <person name="De Clercq R."/>
            <person name="van Montagu M."/>
            <person name="Rogers J."/>
            <person name="Cronin A."/>
            <person name="Quail M.A."/>
            <person name="Bray-Allen S."/>
            <person name="Clark L."/>
            <person name="Doggett J."/>
            <person name="Hall S."/>
            <person name="Kay M."/>
            <person name="Lennard N."/>
            <person name="McLay K."/>
            <person name="Mayes R."/>
            <person name="Pettett A."/>
            <person name="Rajandream M.A."/>
            <person name="Lyne M."/>
            <person name="Benes V."/>
            <person name="Rechmann S."/>
            <person name="Borkova D."/>
            <person name="Bloecker H."/>
            <person name="Scharfe M."/>
            <person name="Grimm M."/>
            <person name="Loehnert T.-H."/>
            <person name="Dose S."/>
            <person name="de Haan M."/>
            <person name="Maarse A.C."/>
            <person name="Schaefer M."/>
            <person name="Mueller-Auer S."/>
            <person name="Gabel C."/>
            <person name="Fuchs M."/>
            <person name="Fartmann B."/>
            <person name="Granderath K."/>
            <person name="Dauner D."/>
            <person name="Herzl A."/>
            <person name="Neumann S."/>
            <person name="Argiriou A."/>
            <person name="Vitale D."/>
            <person name="Liguori R."/>
            <person name="Piravandi E."/>
            <person name="Massenet O."/>
            <person name="Quigley F."/>
            <person name="Clabauld G."/>
            <person name="Muendlein A."/>
            <person name="Felber R."/>
            <person name="Schnabl S."/>
            <person name="Hiller R."/>
            <person name="Schmidt W."/>
            <person name="Lecharny A."/>
            <person name="Aubourg S."/>
            <person name="Chefdor F."/>
            <person name="Cooke R."/>
            <person name="Berger C."/>
            <person name="Monfort A."/>
            <person name="Casacuberta E."/>
            <person name="Gibbons T."/>
            <person name="Weber N."/>
            <person name="Vandenbol M."/>
            <person name="Bargues M."/>
            <person name="Terol J."/>
            <person name="Torres A."/>
            <person name="Perez-Perez A."/>
            <person name="Purnelle B."/>
            <person name="Bent E."/>
            <person name="Johnson S."/>
            <person name="Tacon D."/>
            <person name="Jesse T."/>
            <person name="Heijnen L."/>
            <person name="Schwarz S."/>
            <person name="Scholler P."/>
            <person name="Heber S."/>
            <person name="Francs P."/>
            <person name="Bielke C."/>
            <person name="Frishman D."/>
            <person name="Haase D."/>
            <person name="Lemcke K."/>
            <person name="Mewes H.-W."/>
            <person name="Stocker S."/>
            <person name="Zaccaria P."/>
            <person name="Bevan M."/>
            <person name="Wilson R.K."/>
            <person name="de la Bastide M."/>
            <person name="Habermann K."/>
            <person name="Parnell L."/>
            <person name="Dedhia N."/>
            <person name="Gnoj L."/>
            <person name="Schutz K."/>
            <person name="Huang E."/>
            <person name="Spiegel L."/>
            <person name="Sekhon M."/>
            <person name="Murray J."/>
            <person name="Sheet P."/>
            <person name="Cordes M."/>
            <person name="Abu-Threideh J."/>
            <person name="Stoneking T."/>
            <person name="Kalicki J."/>
            <person name="Graves T."/>
            <person name="Harmon G."/>
            <person name="Edwards J."/>
            <person name="Latreille P."/>
            <person name="Courtney L."/>
            <person name="Cloud J."/>
            <person name="Abbott A."/>
            <person name="Scott K."/>
            <person name="Johnson D."/>
            <person name="Minx P."/>
            <person name="Bentley D."/>
            <person name="Fulton B."/>
            <person name="Miller N."/>
            <person name="Greco T."/>
            <person name="Kemp K."/>
            <person name="Kramer J."/>
            <person name="Fulton L."/>
            <person name="Mardis E."/>
            <person name="Dante M."/>
            <person name="Pepin K."/>
            <person name="Hillier L.W."/>
            <person name="Nelson J."/>
            <person name="Spieth J."/>
            <person name="Ryan E."/>
            <person name="Andrews S."/>
            <person name="Geisel C."/>
            <person name="Layman D."/>
            <person name="Du H."/>
            <person name="Ali J."/>
            <person name="Berghoff A."/>
            <person name="Jones K."/>
            <person name="Drone K."/>
            <person name="Cotton M."/>
            <person name="Joshu C."/>
            <person name="Antonoiu B."/>
            <person name="Zidanic M."/>
            <person name="Strong C."/>
            <person name="Sun H."/>
            <person name="Lamar B."/>
            <person name="Yordan C."/>
            <person name="Ma P."/>
            <person name="Zhong J."/>
            <person name="Preston R."/>
            <person name="Vil D."/>
            <person name="Shekher M."/>
            <person name="Matero A."/>
            <person name="Shah R."/>
            <person name="Swaby I.K."/>
            <person name="O'Shaughnessy A."/>
            <person name="Rodriguez M."/>
            <person name="Hoffman J."/>
            <person name="Till S."/>
            <person name="Granat S."/>
            <person name="Shohdy N."/>
            <person name="Hasegawa A."/>
            <person name="Hameed A."/>
            <person name="Lodhi M."/>
            <person name="Johnson A."/>
            <person name="Chen E."/>
            <person name="Marra M.A."/>
            <person name="Martienssen R."/>
            <person name="McCombie W.R."/>
        </authorList>
    </citation>
    <scope>NUCLEOTIDE SEQUENCE [LARGE SCALE GENOMIC DNA]</scope>
    <source>
        <strain>cv. Columbia</strain>
    </source>
</reference>
<reference key="3">
    <citation type="journal article" date="2017" name="Plant J.">
        <title>Araport11: a complete reannotation of the Arabidopsis thaliana reference genome.</title>
        <authorList>
            <person name="Cheng C.Y."/>
            <person name="Krishnakumar V."/>
            <person name="Chan A.P."/>
            <person name="Thibaud-Nissen F."/>
            <person name="Schobel S."/>
            <person name="Town C.D."/>
        </authorList>
    </citation>
    <scope>GENOME REANNOTATION</scope>
    <source>
        <strain>cv. Columbia</strain>
    </source>
</reference>
<reference key="4">
    <citation type="journal article" date="2003" name="Science">
        <title>Empirical analysis of transcriptional activity in the Arabidopsis genome.</title>
        <authorList>
            <person name="Yamada K."/>
            <person name="Lim J."/>
            <person name="Dale J.M."/>
            <person name="Chen H."/>
            <person name="Shinn P."/>
            <person name="Palm C.J."/>
            <person name="Southwick A.M."/>
            <person name="Wu H.C."/>
            <person name="Kim C.J."/>
            <person name="Nguyen M."/>
            <person name="Pham P.K."/>
            <person name="Cheuk R.F."/>
            <person name="Karlin-Newmann G."/>
            <person name="Liu S.X."/>
            <person name="Lam B."/>
            <person name="Sakano H."/>
            <person name="Wu T."/>
            <person name="Yu G."/>
            <person name="Miranda M."/>
            <person name="Quach H.L."/>
            <person name="Tripp M."/>
            <person name="Chang C.H."/>
            <person name="Lee J.M."/>
            <person name="Toriumi M.J."/>
            <person name="Chan M.M."/>
            <person name="Tang C.C."/>
            <person name="Onodera C.S."/>
            <person name="Deng J.M."/>
            <person name="Akiyama K."/>
            <person name="Ansari Y."/>
            <person name="Arakawa T."/>
            <person name="Banh J."/>
            <person name="Banno F."/>
            <person name="Bowser L."/>
            <person name="Brooks S.Y."/>
            <person name="Carninci P."/>
            <person name="Chao Q."/>
            <person name="Choy N."/>
            <person name="Enju A."/>
            <person name="Goldsmith A.D."/>
            <person name="Gurjal M."/>
            <person name="Hansen N.F."/>
            <person name="Hayashizaki Y."/>
            <person name="Johnson-Hopson C."/>
            <person name="Hsuan V.W."/>
            <person name="Iida K."/>
            <person name="Karnes M."/>
            <person name="Khan S."/>
            <person name="Koesema E."/>
            <person name="Ishida J."/>
            <person name="Jiang P.X."/>
            <person name="Jones T."/>
            <person name="Kawai J."/>
            <person name="Kamiya A."/>
            <person name="Meyers C."/>
            <person name="Nakajima M."/>
            <person name="Narusaka M."/>
            <person name="Seki M."/>
            <person name="Sakurai T."/>
            <person name="Satou M."/>
            <person name="Tamse R."/>
            <person name="Vaysberg M."/>
            <person name="Wallender E.K."/>
            <person name="Wong C."/>
            <person name="Yamamura Y."/>
            <person name="Yuan S."/>
            <person name="Shinozaki K."/>
            <person name="Davis R.W."/>
            <person name="Theologis A."/>
            <person name="Ecker J.R."/>
        </authorList>
    </citation>
    <scope>NUCLEOTIDE SEQUENCE [LARGE SCALE MRNA]</scope>
    <source>
        <strain>cv. Columbia</strain>
    </source>
</reference>
<organism>
    <name type="scientific">Arabidopsis thaliana</name>
    <name type="common">Mouse-ear cress</name>
    <dbReference type="NCBI Taxonomy" id="3702"/>
    <lineage>
        <taxon>Eukaryota</taxon>
        <taxon>Viridiplantae</taxon>
        <taxon>Streptophyta</taxon>
        <taxon>Embryophyta</taxon>
        <taxon>Tracheophyta</taxon>
        <taxon>Spermatophyta</taxon>
        <taxon>Magnoliopsida</taxon>
        <taxon>eudicotyledons</taxon>
        <taxon>Gunneridae</taxon>
        <taxon>Pentapetalae</taxon>
        <taxon>rosids</taxon>
        <taxon>malvids</taxon>
        <taxon>Brassicales</taxon>
        <taxon>Brassicaceae</taxon>
        <taxon>Camelineae</taxon>
        <taxon>Arabidopsis</taxon>
    </lineage>
</organism>
<dbReference type="EC" id="3.4.23.-" evidence="5"/>
<dbReference type="EMBL" id="Z97341">
    <property type="protein sequence ID" value="CAB10432.1"/>
    <property type="status" value="ALT_SEQ"/>
    <property type="molecule type" value="Genomic_DNA"/>
</dbReference>
<dbReference type="EMBL" id="AL161544">
    <property type="protein sequence ID" value="CAB78698.1"/>
    <property type="status" value="ALT_SEQ"/>
    <property type="molecule type" value="Genomic_DNA"/>
</dbReference>
<dbReference type="EMBL" id="CP002687">
    <property type="protein sequence ID" value="AEE83770.1"/>
    <property type="molecule type" value="Genomic_DNA"/>
</dbReference>
<dbReference type="EMBL" id="AY054167">
    <property type="protein sequence ID" value="AAL06828.1"/>
    <property type="molecule type" value="mRNA"/>
</dbReference>
<dbReference type="EMBL" id="AY074554">
    <property type="protein sequence ID" value="AAL67094.1"/>
    <property type="molecule type" value="mRNA"/>
</dbReference>
<dbReference type="RefSeq" id="NP_567506.1">
    <property type="nucleotide sequence ID" value="NM_117756.7"/>
</dbReference>
<dbReference type="SMR" id="Q940R4"/>
<dbReference type="STRING" id="3702.Q940R4"/>
<dbReference type="MEROPS" id="A01.A50"/>
<dbReference type="GlyGen" id="Q940R4">
    <property type="glycosylation" value="4 sites"/>
</dbReference>
<dbReference type="PaxDb" id="3702-AT4G16563.1"/>
<dbReference type="ProteomicsDB" id="246693"/>
<dbReference type="EnsemblPlants" id="AT4G16563.1">
    <property type="protein sequence ID" value="AT4G16563.1"/>
    <property type="gene ID" value="AT4G16563"/>
</dbReference>
<dbReference type="GeneID" id="827356"/>
<dbReference type="Gramene" id="AT4G16563.1">
    <property type="protein sequence ID" value="AT4G16563.1"/>
    <property type="gene ID" value="AT4G16563"/>
</dbReference>
<dbReference type="KEGG" id="ath:AT4G16563"/>
<dbReference type="Araport" id="AT4G16563"/>
<dbReference type="TAIR" id="AT4G16563"/>
<dbReference type="eggNOG" id="KOG1339">
    <property type="taxonomic scope" value="Eukaryota"/>
</dbReference>
<dbReference type="HOGENOM" id="CLU_005738_8_1_1"/>
<dbReference type="InParanoid" id="Q940R4"/>
<dbReference type="OMA" id="PCHPFDC"/>
<dbReference type="OrthoDB" id="2747330at2759"/>
<dbReference type="PhylomeDB" id="Q940R4"/>
<dbReference type="PRO" id="PR:Q940R4"/>
<dbReference type="Proteomes" id="UP000006548">
    <property type="component" value="Chromosome 4"/>
</dbReference>
<dbReference type="ExpressionAtlas" id="Q940R4">
    <property type="expression patterns" value="baseline and differential"/>
</dbReference>
<dbReference type="GO" id="GO:0009505">
    <property type="term" value="C:plant-type cell wall"/>
    <property type="evidence" value="ECO:0007005"/>
    <property type="project" value="TAIR"/>
</dbReference>
<dbReference type="GO" id="GO:0004190">
    <property type="term" value="F:aspartic-type endopeptidase activity"/>
    <property type="evidence" value="ECO:0007669"/>
    <property type="project" value="UniProtKB-KW"/>
</dbReference>
<dbReference type="GO" id="GO:0006508">
    <property type="term" value="P:proteolysis"/>
    <property type="evidence" value="ECO:0007669"/>
    <property type="project" value="UniProtKB-KW"/>
</dbReference>
<dbReference type="CDD" id="cd05476">
    <property type="entry name" value="pepsin_A_like_plant"/>
    <property type="match status" value="1"/>
</dbReference>
<dbReference type="FunFam" id="2.40.70.10:FF:000063">
    <property type="entry name" value="aspartic proteinase nepenthesin-1"/>
    <property type="match status" value="1"/>
</dbReference>
<dbReference type="FunFam" id="2.40.70.10:FF:000055">
    <property type="entry name" value="Probable aspartyl protease At4g16563"/>
    <property type="match status" value="1"/>
</dbReference>
<dbReference type="Gene3D" id="2.40.70.10">
    <property type="entry name" value="Acid Proteases"/>
    <property type="match status" value="2"/>
</dbReference>
<dbReference type="InterPro" id="IPR001969">
    <property type="entry name" value="Aspartic_peptidase_AS"/>
</dbReference>
<dbReference type="InterPro" id="IPR034161">
    <property type="entry name" value="Pepsin-like_plant"/>
</dbReference>
<dbReference type="InterPro" id="IPR033121">
    <property type="entry name" value="PEPTIDASE_A1"/>
</dbReference>
<dbReference type="InterPro" id="IPR021109">
    <property type="entry name" value="Peptidase_aspartic_dom_sf"/>
</dbReference>
<dbReference type="InterPro" id="IPR051708">
    <property type="entry name" value="Plant_Aspart_Prot_A1"/>
</dbReference>
<dbReference type="InterPro" id="IPR032799">
    <property type="entry name" value="TAXi_C"/>
</dbReference>
<dbReference type="InterPro" id="IPR032861">
    <property type="entry name" value="TAXi_N"/>
</dbReference>
<dbReference type="PANTHER" id="PTHR47967">
    <property type="entry name" value="OS07G0603500 PROTEIN-RELATED"/>
    <property type="match status" value="1"/>
</dbReference>
<dbReference type="PANTHER" id="PTHR47967:SF26">
    <property type="entry name" value="PEPTIDASE A1 DOMAIN-CONTAINING PROTEIN"/>
    <property type="match status" value="1"/>
</dbReference>
<dbReference type="Pfam" id="PF14541">
    <property type="entry name" value="TAXi_C"/>
    <property type="match status" value="1"/>
</dbReference>
<dbReference type="Pfam" id="PF14543">
    <property type="entry name" value="TAXi_N"/>
    <property type="match status" value="1"/>
</dbReference>
<dbReference type="SUPFAM" id="SSF50630">
    <property type="entry name" value="Acid proteases"/>
    <property type="match status" value="1"/>
</dbReference>
<dbReference type="PROSITE" id="PS00141">
    <property type="entry name" value="ASP_PROTEASE"/>
    <property type="match status" value="1"/>
</dbReference>
<dbReference type="PROSITE" id="PS51767">
    <property type="entry name" value="PEPTIDASE_A1"/>
    <property type="match status" value="1"/>
</dbReference>